<proteinExistence type="evidence at protein level"/>
<comment type="function">
    <text evidence="4">Catalyzes the isomerization of citrate to isocitrate via cis-aconitate (PubMed:12438312). Has probably no RNA-binding activity (PubMed:12438312).</text>
</comment>
<comment type="catalytic activity">
    <reaction evidence="4">
        <text>citrate = D-threo-isocitrate</text>
        <dbReference type="Rhea" id="RHEA:10336"/>
        <dbReference type="ChEBI" id="CHEBI:15562"/>
        <dbReference type="ChEBI" id="CHEBI:16947"/>
        <dbReference type="EC" id="4.2.1.3"/>
    </reaction>
</comment>
<comment type="cofactor">
    <cofactor evidence="2">
        <name>[4Fe-4S] cluster</name>
        <dbReference type="ChEBI" id="CHEBI:49883"/>
    </cofactor>
    <text evidence="2">Binds 1 [4Fe-4S] cluster per subunit.</text>
</comment>
<comment type="subunit">
    <text evidence="3">Interacts with gex-3.</text>
</comment>
<comment type="subcellular location">
    <subcellularLocation>
        <location evidence="4">Cytoplasm</location>
        <location evidence="4">Cytosol</location>
    </subcellularLocation>
</comment>
<comment type="similarity">
    <text evidence="5">Belongs to the aconitase/IPM isomerase family.</text>
</comment>
<accession>Q23500</accession>
<dbReference type="EC" id="4.2.1.3" evidence="4"/>
<dbReference type="EMBL" id="Z66567">
    <property type="protein sequence ID" value="CAA91491.1"/>
    <property type="molecule type" value="Genomic_DNA"/>
</dbReference>
<dbReference type="PIR" id="T27868">
    <property type="entry name" value="T27868"/>
</dbReference>
<dbReference type="RefSeq" id="NP_509898.1">
    <property type="nucleotide sequence ID" value="NM_077497.4"/>
</dbReference>
<dbReference type="SMR" id="Q23500"/>
<dbReference type="BioGRID" id="46233">
    <property type="interactions" value="29"/>
</dbReference>
<dbReference type="DIP" id="DIP-26479N"/>
<dbReference type="FunCoup" id="Q23500">
    <property type="interactions" value="1949"/>
</dbReference>
<dbReference type="IntAct" id="Q23500">
    <property type="interactions" value="1"/>
</dbReference>
<dbReference type="STRING" id="6239.ZK455.1.2"/>
<dbReference type="PaxDb" id="6239-ZK455.1"/>
<dbReference type="PeptideAtlas" id="Q23500"/>
<dbReference type="EnsemblMetazoa" id="ZK455.1.1">
    <property type="protein sequence ID" value="ZK455.1.1"/>
    <property type="gene ID" value="WBGene00000040"/>
</dbReference>
<dbReference type="GeneID" id="181324"/>
<dbReference type="KEGG" id="cel:CELE_ZK455.1"/>
<dbReference type="UCSC" id="ZK455.1.1">
    <property type="organism name" value="c. elegans"/>
</dbReference>
<dbReference type="AGR" id="WB:WBGene00000040"/>
<dbReference type="CTD" id="181324"/>
<dbReference type="WormBase" id="ZK455.1">
    <property type="protein sequence ID" value="CE03812"/>
    <property type="gene ID" value="WBGene00000040"/>
    <property type="gene designation" value="aco-1"/>
</dbReference>
<dbReference type="eggNOG" id="KOG0452">
    <property type="taxonomic scope" value="Eukaryota"/>
</dbReference>
<dbReference type="GeneTree" id="ENSGT00940000167487"/>
<dbReference type="HOGENOM" id="CLU_013476_2_1_1"/>
<dbReference type="InParanoid" id="Q23500"/>
<dbReference type="OMA" id="NGGIMQY"/>
<dbReference type="OrthoDB" id="2279155at2759"/>
<dbReference type="PhylomeDB" id="Q23500"/>
<dbReference type="BRENDA" id="4.2.1.3">
    <property type="organism ID" value="1045"/>
</dbReference>
<dbReference type="Reactome" id="R-CEL-389542">
    <property type="pathway name" value="NADPH regeneration"/>
</dbReference>
<dbReference type="Reactome" id="R-CEL-917937">
    <property type="pathway name" value="Iron uptake and transport"/>
</dbReference>
<dbReference type="PRO" id="PR:Q23500"/>
<dbReference type="Proteomes" id="UP000001940">
    <property type="component" value="Chromosome X"/>
</dbReference>
<dbReference type="Bgee" id="WBGene00000040">
    <property type="expression patterns" value="Expressed in larva and 4 other cell types or tissues"/>
</dbReference>
<dbReference type="GO" id="GO:0005829">
    <property type="term" value="C:cytosol"/>
    <property type="evidence" value="ECO:0000314"/>
    <property type="project" value="WormBase"/>
</dbReference>
<dbReference type="GO" id="GO:0051539">
    <property type="term" value="F:4 iron, 4 sulfur cluster binding"/>
    <property type="evidence" value="ECO:0000318"/>
    <property type="project" value="GO_Central"/>
</dbReference>
<dbReference type="GO" id="GO:0003994">
    <property type="term" value="F:aconitate hydratase activity"/>
    <property type="evidence" value="ECO:0000314"/>
    <property type="project" value="WormBase"/>
</dbReference>
<dbReference type="GO" id="GO:0046872">
    <property type="term" value="F:metal ion binding"/>
    <property type="evidence" value="ECO:0007669"/>
    <property type="project" value="UniProtKB-KW"/>
</dbReference>
<dbReference type="GO" id="GO:0006879">
    <property type="term" value="P:intracellular iron ion homeostasis"/>
    <property type="evidence" value="ECO:0000250"/>
    <property type="project" value="WormBase"/>
</dbReference>
<dbReference type="GO" id="GO:0006099">
    <property type="term" value="P:tricarboxylic acid cycle"/>
    <property type="evidence" value="ECO:0007669"/>
    <property type="project" value="UniProtKB-KW"/>
</dbReference>
<dbReference type="GO" id="GO:0072350">
    <property type="term" value="P:tricarboxylic acid metabolic process"/>
    <property type="evidence" value="ECO:0000314"/>
    <property type="project" value="WormBase"/>
</dbReference>
<dbReference type="CDD" id="cd01586">
    <property type="entry name" value="AcnA_IRP"/>
    <property type="match status" value="1"/>
</dbReference>
<dbReference type="CDD" id="cd01580">
    <property type="entry name" value="AcnA_IRP_Swivel"/>
    <property type="match status" value="1"/>
</dbReference>
<dbReference type="FunFam" id="3.20.19.10:FF:000001">
    <property type="entry name" value="Aconitate hydratase"/>
    <property type="match status" value="1"/>
</dbReference>
<dbReference type="FunFam" id="3.30.499.10:FF:000002">
    <property type="entry name" value="Aconitate hydratase"/>
    <property type="match status" value="1"/>
</dbReference>
<dbReference type="FunFam" id="3.30.499.10:FF:000005">
    <property type="entry name" value="cytoplasmic aconitate hydratase"/>
    <property type="match status" value="1"/>
</dbReference>
<dbReference type="Gene3D" id="6.10.190.10">
    <property type="match status" value="1"/>
</dbReference>
<dbReference type="Gene3D" id="3.30.499.10">
    <property type="entry name" value="Aconitase, domain 3"/>
    <property type="match status" value="2"/>
</dbReference>
<dbReference type="Gene3D" id="3.20.19.10">
    <property type="entry name" value="Aconitase, domain 4"/>
    <property type="match status" value="1"/>
</dbReference>
<dbReference type="InterPro" id="IPR044137">
    <property type="entry name" value="AcnA_IRP_Swivel"/>
</dbReference>
<dbReference type="InterPro" id="IPR015931">
    <property type="entry name" value="Acnase/IPM_dHydase_lsu_aba_1/3"/>
</dbReference>
<dbReference type="InterPro" id="IPR001030">
    <property type="entry name" value="Acoase/IPM_deHydtase_lsu_aba"/>
</dbReference>
<dbReference type="InterPro" id="IPR015928">
    <property type="entry name" value="Aconitase/3IPM_dehydase_swvl"/>
</dbReference>
<dbReference type="InterPro" id="IPR006249">
    <property type="entry name" value="Aconitase/IRP2"/>
</dbReference>
<dbReference type="InterPro" id="IPR018136">
    <property type="entry name" value="Aconitase_4Fe-4S_BS"/>
</dbReference>
<dbReference type="InterPro" id="IPR036008">
    <property type="entry name" value="Aconitase_4Fe-4S_dom"/>
</dbReference>
<dbReference type="InterPro" id="IPR000573">
    <property type="entry name" value="AconitaseA/IPMdHydase_ssu_swvl"/>
</dbReference>
<dbReference type="NCBIfam" id="TIGR01341">
    <property type="entry name" value="aconitase_1"/>
    <property type="match status" value="1"/>
</dbReference>
<dbReference type="NCBIfam" id="NF006757">
    <property type="entry name" value="PRK09277.1"/>
    <property type="match status" value="1"/>
</dbReference>
<dbReference type="NCBIfam" id="NF009520">
    <property type="entry name" value="PRK12881.1"/>
    <property type="match status" value="1"/>
</dbReference>
<dbReference type="PANTHER" id="PTHR11670">
    <property type="entry name" value="ACONITASE/IRON-RESPONSIVE ELEMENT FAMILY MEMBER"/>
    <property type="match status" value="1"/>
</dbReference>
<dbReference type="Pfam" id="PF00330">
    <property type="entry name" value="Aconitase"/>
    <property type="match status" value="1"/>
</dbReference>
<dbReference type="Pfam" id="PF00694">
    <property type="entry name" value="Aconitase_C"/>
    <property type="match status" value="1"/>
</dbReference>
<dbReference type="PRINTS" id="PR00415">
    <property type="entry name" value="ACONITASE"/>
</dbReference>
<dbReference type="SUPFAM" id="SSF53732">
    <property type="entry name" value="Aconitase iron-sulfur domain"/>
    <property type="match status" value="1"/>
</dbReference>
<dbReference type="SUPFAM" id="SSF52016">
    <property type="entry name" value="LeuD/IlvD-like"/>
    <property type="match status" value="1"/>
</dbReference>
<dbReference type="PROSITE" id="PS00450">
    <property type="entry name" value="ACONITASE_1"/>
    <property type="match status" value="1"/>
</dbReference>
<dbReference type="PROSITE" id="PS01244">
    <property type="entry name" value="ACONITASE_2"/>
    <property type="match status" value="1"/>
</dbReference>
<name>ACOHC_CAEEL</name>
<sequence length="887" mass="96660">MAFNNLIRNLAIGDNVYKYFDLNGLNDARYNELPISIKYLLEAAVRHCDEFHVLKKDVETILDWKNSQRNQAEIPFKPARVILQDFTGVPAVVDLAAMRDAVQNMGADPAKINPVCPVDLVIDHSVQVDHYGNLEALAKNQSIEFERNRERFNFLKWGSKAFDNLLIVPPGSGIVHQVNLEYLARTVFVGKDGVLYPDSVVGTDSHTTMIDGSGVLGWGVGGIEAEAVMLGQPISMVIPEVIGYELVGTLSDTVTSTDLVLTITKNLRDLGVVGKFVEFFGTGVASLSIADRATIANMCPEYGATIGFFPVDSRTIDYLTQTGRDTDYTQRVEQYLKSVGMFVNFTDDSYRPTYTTTLKLDLGSVVPSVSGPKRPHDRVELASLAQDFSKGLTDKISFKAFGLKPEDATKSVTITNHGRTAELTHGSVVIAAITSCTNTSNPSVMLAAGLVAKKAVELGLNVQPYVKTSLSPGSGVVTKYLEASGLLPYLEKIGFNIAGYGCMTCIGNSGPLDEPVTKAIEENNLVVAGVLSGNRNFEGRIHPHVRANYLASPPLAVLYSIIGNVNVDINGVLAVTPDGKEIRLADIWPTRKEVAKFEEEFVKPQFFREVYANIELGSTEWQQLECPAVKLYPWDDASTYIKKVPFFDGMTSELPSQSDIVNAHVLLNLGDSVTTDHISPAGSISKTSPAARFLAGRGVTPRDFNTYGARRGNDEIMARGTFANIRLVNKLASKVGPITLHVPSGEELDIFDAAQKYKDAGIPAIILAGKEYGCGSSRDWAAKGPFLQGVKAVIAESFERIHRSNLIGMGIIPFQYQAGQNADSLGLTGKEQFSIGVPDDLKPGQLIDVNVSNGSVFQVICRFDTEVELTYYRNGGILQYMIRKLIQ</sequence>
<gene>
    <name type="primary">aco-1</name>
    <name type="synonym">gei-22</name>
    <name type="ORF">ZK455.1</name>
</gene>
<organism>
    <name type="scientific">Caenorhabditis elegans</name>
    <dbReference type="NCBI Taxonomy" id="6239"/>
    <lineage>
        <taxon>Eukaryota</taxon>
        <taxon>Metazoa</taxon>
        <taxon>Ecdysozoa</taxon>
        <taxon>Nematoda</taxon>
        <taxon>Chromadorea</taxon>
        <taxon>Rhabditida</taxon>
        <taxon>Rhabditina</taxon>
        <taxon>Rhabditomorpha</taxon>
        <taxon>Rhabditoidea</taxon>
        <taxon>Rhabditidae</taxon>
        <taxon>Peloderinae</taxon>
        <taxon>Caenorhabditis</taxon>
    </lineage>
</organism>
<keyword id="KW-0004">4Fe-4S</keyword>
<keyword id="KW-0963">Cytoplasm</keyword>
<keyword id="KW-0408">Iron</keyword>
<keyword id="KW-0411">Iron-sulfur</keyword>
<keyword id="KW-0456">Lyase</keyword>
<keyword id="KW-0479">Metal-binding</keyword>
<keyword id="KW-1185">Reference proteome</keyword>
<keyword id="KW-0816">Tricarboxylic acid cycle</keyword>
<protein>
    <recommendedName>
        <fullName evidence="6">Cytoplasmic aconitate hydratase</fullName>
        <shortName>Aconitase</shortName>
        <ecNumber evidence="4">4.2.1.3</ecNumber>
    </recommendedName>
    <alternativeName>
        <fullName>Citrate hydro-lyase</fullName>
    </alternativeName>
    <alternativeName>
        <fullName>Gex-3-interacting protein 22</fullName>
    </alternativeName>
</protein>
<feature type="chain" id="PRO_0000076650" description="Cytoplasmic aconitate hydratase">
    <location>
        <begin position="1"/>
        <end position="887"/>
    </location>
</feature>
<feature type="binding site" evidence="1">
    <location>
        <position position="84"/>
    </location>
    <ligand>
        <name>substrate</name>
    </ligand>
</feature>
<feature type="binding site" evidence="1">
    <location>
        <begin position="204"/>
        <end position="206"/>
    </location>
    <ligand>
        <name>substrate</name>
    </ligand>
</feature>
<feature type="binding site" evidence="1">
    <location>
        <position position="436"/>
    </location>
    <ligand>
        <name>[4Fe-4S] cluster</name>
        <dbReference type="ChEBI" id="CHEBI:49883"/>
    </ligand>
</feature>
<feature type="binding site" evidence="1">
    <location>
        <position position="502"/>
    </location>
    <ligand>
        <name>[4Fe-4S] cluster</name>
        <dbReference type="ChEBI" id="CHEBI:49883"/>
    </ligand>
</feature>
<feature type="binding site" evidence="1">
    <location>
        <position position="505"/>
    </location>
    <ligand>
        <name>[4Fe-4S] cluster</name>
        <dbReference type="ChEBI" id="CHEBI:49883"/>
    </ligand>
</feature>
<feature type="binding site" evidence="1">
    <location>
        <position position="535"/>
    </location>
    <ligand>
        <name>substrate</name>
    </ligand>
</feature>
<feature type="binding site" evidence="1">
    <location>
        <position position="540"/>
    </location>
    <ligand>
        <name>substrate</name>
    </ligand>
</feature>
<feature type="binding site" evidence="1">
    <location>
        <position position="697"/>
    </location>
    <ligand>
        <name>substrate</name>
    </ligand>
</feature>
<feature type="binding site" evidence="1">
    <location>
        <begin position="777"/>
        <end position="778"/>
    </location>
    <ligand>
        <name>substrate</name>
    </ligand>
</feature>
<evidence type="ECO:0000250" key="1"/>
<evidence type="ECO:0000250" key="2">
    <source>
        <dbReference type="UniProtKB" id="P21399"/>
    </source>
</evidence>
<evidence type="ECO:0000269" key="3">
    <source>
    </source>
</evidence>
<evidence type="ECO:0000269" key="4">
    <source>
    </source>
</evidence>
<evidence type="ECO:0000305" key="5"/>
<evidence type="ECO:0000305" key="6">
    <source>
    </source>
</evidence>
<reference key="1">
    <citation type="journal article" date="1998" name="Science">
        <title>Genome sequence of the nematode C. elegans: a platform for investigating biology.</title>
        <authorList>
            <consortium name="The C. elegans sequencing consortium"/>
        </authorList>
    </citation>
    <scope>NUCLEOTIDE SEQUENCE [LARGE SCALE GENOMIC DNA]</scope>
    <source>
        <strain>Bristol N2</strain>
    </source>
</reference>
<reference key="2">
    <citation type="journal article" date="2003" name="J. Biol. Chem.">
        <title>Cytosolic aconitase and ferritin are regulated by iron in Caenorhabditis elegans.</title>
        <authorList>
            <person name="Gourley B.L."/>
            <person name="Parker S.B."/>
            <person name="Jones B.J."/>
            <person name="Zumbrennen K.B."/>
            <person name="Leibold E.A."/>
        </authorList>
    </citation>
    <scope>FUNCTION</scope>
    <scope>CATALYTIC ACTIVITY</scope>
    <scope>ACTIVITY REGULATION</scope>
    <scope>SUBCELLULAR LOCATION</scope>
</reference>
<reference key="3">
    <citation type="journal article" date="2002" name="Biochem. Biophys. Res. Commun.">
        <title>Isolation of the interacting molecules with GEX-3 by a novel functional screening.</title>
        <authorList>
            <person name="Tsuboi D."/>
            <person name="Qadota H."/>
            <person name="Kasuya K."/>
            <person name="Amano M."/>
            <person name="Kaibuchi K."/>
        </authorList>
    </citation>
    <scope>INTERACTION WITH GEX-3</scope>
</reference>